<dbReference type="EC" id="1.-.-.-" evidence="1"/>
<dbReference type="EMBL" id="AE013598">
    <property type="protein sequence ID" value="AAW77521.1"/>
    <property type="molecule type" value="Genomic_DNA"/>
</dbReference>
<dbReference type="SMR" id="Q5GUV2"/>
<dbReference type="STRING" id="291331.XOO4267"/>
<dbReference type="KEGG" id="xoo:XOO4267"/>
<dbReference type="HOGENOM" id="CLU_084441_0_0_6"/>
<dbReference type="Proteomes" id="UP000006735">
    <property type="component" value="Chromosome"/>
</dbReference>
<dbReference type="GO" id="GO:0016491">
    <property type="term" value="F:oxidoreductase activity"/>
    <property type="evidence" value="ECO:0007669"/>
    <property type="project" value="UniProtKB-UniRule"/>
</dbReference>
<dbReference type="CDD" id="cd02148">
    <property type="entry name" value="RutE-like"/>
    <property type="match status" value="1"/>
</dbReference>
<dbReference type="Gene3D" id="3.40.109.10">
    <property type="entry name" value="NADH Oxidase"/>
    <property type="match status" value="1"/>
</dbReference>
<dbReference type="HAMAP" id="MF_01204">
    <property type="entry name" value="Oxidoreductase_RutE_HadB"/>
    <property type="match status" value="1"/>
</dbReference>
<dbReference type="InterPro" id="IPR029479">
    <property type="entry name" value="Nitroreductase"/>
</dbReference>
<dbReference type="InterPro" id="IPR000415">
    <property type="entry name" value="Nitroreductase-like"/>
</dbReference>
<dbReference type="InterPro" id="IPR050461">
    <property type="entry name" value="Nitroreductase_HadB/RutE"/>
</dbReference>
<dbReference type="InterPro" id="IPR023936">
    <property type="entry name" value="RutE-like"/>
</dbReference>
<dbReference type="NCBIfam" id="NF003768">
    <property type="entry name" value="PRK05365.1"/>
    <property type="match status" value="1"/>
</dbReference>
<dbReference type="PANTHER" id="PTHR43543">
    <property type="entry name" value="MALONIC SEMIALDEHYDE REDUCTASE RUTE-RELATED"/>
    <property type="match status" value="1"/>
</dbReference>
<dbReference type="PANTHER" id="PTHR43543:SF1">
    <property type="entry name" value="MALONIC SEMIALDEHYDE REDUCTASE RUTE-RELATED"/>
    <property type="match status" value="1"/>
</dbReference>
<dbReference type="Pfam" id="PF00881">
    <property type="entry name" value="Nitroreductase"/>
    <property type="match status" value="1"/>
</dbReference>
<dbReference type="SUPFAM" id="SSF55469">
    <property type="entry name" value="FMN-dependent nitroreductase-like"/>
    <property type="match status" value="1"/>
</dbReference>
<keyword id="KW-0285">Flavoprotein</keyword>
<keyword id="KW-0288">FMN</keyword>
<keyword id="KW-0520">NAD</keyword>
<keyword id="KW-0521">NADP</keyword>
<keyword id="KW-0560">Oxidoreductase</keyword>
<keyword id="KW-1185">Reference proteome</keyword>
<comment type="cofactor">
    <cofactor evidence="1">
        <name>FMN</name>
        <dbReference type="ChEBI" id="CHEBI:58210"/>
    </cofactor>
</comment>
<comment type="similarity">
    <text evidence="1">Belongs to the nitroreductase family. HadB/RutE subfamily.</text>
</comment>
<sequence length="198" mass="21252">MLMSDSLNAAALDQLFRTARTQNAFADTPVSQEVLRELYELVKWGPTAANSGPARFVFVTSADGKAKLKPALSEGNAAKTLAAPVTVIVAHDEDFHEKLPYLFPHADAKSWFDGPREGRAESAFRNGSLQGAYLILAARALGLDAGPMSGFDNAKVDAAFFAGTPIKSNFLVNLGYGDPAGLFPRSPRLSFDEAARFE</sequence>
<proteinExistence type="inferred from homology"/>
<organism>
    <name type="scientific">Xanthomonas oryzae pv. oryzae (strain KACC10331 / KXO85)</name>
    <dbReference type="NCBI Taxonomy" id="291331"/>
    <lineage>
        <taxon>Bacteria</taxon>
        <taxon>Pseudomonadati</taxon>
        <taxon>Pseudomonadota</taxon>
        <taxon>Gammaproteobacteria</taxon>
        <taxon>Lysobacterales</taxon>
        <taxon>Lysobacteraceae</taxon>
        <taxon>Xanthomonas</taxon>
    </lineage>
</organism>
<reference key="1">
    <citation type="journal article" date="2005" name="Nucleic Acids Res.">
        <title>The genome sequence of Xanthomonas oryzae pathovar oryzae KACC10331, the bacterial blight pathogen of rice.</title>
        <authorList>
            <person name="Lee B.-M."/>
            <person name="Park Y.-J."/>
            <person name="Park D.-S."/>
            <person name="Kang H.-W."/>
            <person name="Kim J.-G."/>
            <person name="Song E.-S."/>
            <person name="Park I.-C."/>
            <person name="Yoon U.-H."/>
            <person name="Hahn J.-H."/>
            <person name="Koo B.-S."/>
            <person name="Lee G.-B."/>
            <person name="Kim H."/>
            <person name="Park H.-S."/>
            <person name="Yoon K.-O."/>
            <person name="Kim J.-H."/>
            <person name="Jung C.-H."/>
            <person name="Koh N.-H."/>
            <person name="Seo J.-S."/>
            <person name="Go S.-J."/>
        </authorList>
    </citation>
    <scope>NUCLEOTIDE SEQUENCE [LARGE SCALE GENOMIC DNA]</scope>
    <source>
        <strain>KACC10331 / KXO85</strain>
    </source>
</reference>
<evidence type="ECO:0000255" key="1">
    <source>
        <dbReference type="HAMAP-Rule" id="MF_01204"/>
    </source>
</evidence>
<name>Y4267_XANOR</name>
<feature type="chain" id="PRO_1000066152" description="Putative NADH dehydrogenase/NAD(P)H nitroreductase XOO4267">
    <location>
        <begin position="1"/>
        <end position="198"/>
    </location>
</feature>
<accession>Q5GUV2</accession>
<protein>
    <recommendedName>
        <fullName evidence="1">Putative NADH dehydrogenase/NAD(P)H nitroreductase XOO4267</fullName>
        <ecNumber evidence="1">1.-.-.-</ecNumber>
    </recommendedName>
</protein>
<gene>
    <name type="ordered locus">XOO4267</name>
</gene>